<proteinExistence type="inferred from homology"/>
<feature type="chain" id="PRO_0000233735" description="Bifunctional protein GlmU">
    <location>
        <begin position="1"/>
        <end position="448"/>
    </location>
</feature>
<feature type="region of interest" description="Pyrophosphorylase" evidence="1">
    <location>
        <begin position="1"/>
        <end position="230"/>
    </location>
</feature>
<feature type="region of interest" description="Linker" evidence="1">
    <location>
        <begin position="231"/>
        <end position="251"/>
    </location>
</feature>
<feature type="region of interest" description="N-acetyltransferase" evidence="1">
    <location>
        <begin position="252"/>
        <end position="448"/>
    </location>
</feature>
<feature type="active site" description="Proton acceptor" evidence="1">
    <location>
        <position position="347"/>
    </location>
</feature>
<feature type="binding site" evidence="1">
    <location>
        <begin position="9"/>
        <end position="12"/>
    </location>
    <ligand>
        <name>UDP-N-acetyl-alpha-D-glucosamine</name>
        <dbReference type="ChEBI" id="CHEBI:57705"/>
    </ligand>
</feature>
<feature type="binding site" evidence="1">
    <location>
        <position position="23"/>
    </location>
    <ligand>
        <name>UDP-N-acetyl-alpha-D-glucosamine</name>
        <dbReference type="ChEBI" id="CHEBI:57705"/>
    </ligand>
</feature>
<feature type="binding site" evidence="1">
    <location>
        <position position="76"/>
    </location>
    <ligand>
        <name>UDP-N-acetyl-alpha-D-glucosamine</name>
        <dbReference type="ChEBI" id="CHEBI:57705"/>
    </ligand>
</feature>
<feature type="binding site" evidence="1">
    <location>
        <begin position="81"/>
        <end position="82"/>
    </location>
    <ligand>
        <name>UDP-N-acetyl-alpha-D-glucosamine</name>
        <dbReference type="ChEBI" id="CHEBI:57705"/>
    </ligand>
</feature>
<feature type="binding site" evidence="1">
    <location>
        <position position="106"/>
    </location>
    <ligand>
        <name>Mg(2+)</name>
        <dbReference type="ChEBI" id="CHEBI:18420"/>
    </ligand>
</feature>
<feature type="binding site" evidence="1">
    <location>
        <position position="142"/>
    </location>
    <ligand>
        <name>UDP-N-acetyl-alpha-D-glucosamine</name>
        <dbReference type="ChEBI" id="CHEBI:57705"/>
    </ligand>
</feature>
<feature type="binding site" evidence="1">
    <location>
        <position position="156"/>
    </location>
    <ligand>
        <name>UDP-N-acetyl-alpha-D-glucosamine</name>
        <dbReference type="ChEBI" id="CHEBI:57705"/>
    </ligand>
</feature>
<feature type="binding site" evidence="1">
    <location>
        <position position="171"/>
    </location>
    <ligand>
        <name>UDP-N-acetyl-alpha-D-glucosamine</name>
        <dbReference type="ChEBI" id="CHEBI:57705"/>
    </ligand>
</feature>
<feature type="binding site" evidence="1">
    <location>
        <position position="228"/>
    </location>
    <ligand>
        <name>Mg(2+)</name>
        <dbReference type="ChEBI" id="CHEBI:18420"/>
    </ligand>
</feature>
<feature type="binding site" evidence="1">
    <location>
        <position position="228"/>
    </location>
    <ligand>
        <name>UDP-N-acetyl-alpha-D-glucosamine</name>
        <dbReference type="ChEBI" id="CHEBI:57705"/>
    </ligand>
</feature>
<feature type="binding site" evidence="1">
    <location>
        <position position="317"/>
    </location>
    <ligand>
        <name>UDP-N-acetyl-alpha-D-glucosamine</name>
        <dbReference type="ChEBI" id="CHEBI:57705"/>
    </ligand>
</feature>
<feature type="binding site" evidence="1">
    <location>
        <position position="335"/>
    </location>
    <ligand>
        <name>UDP-N-acetyl-alpha-D-glucosamine</name>
        <dbReference type="ChEBI" id="CHEBI:57705"/>
    </ligand>
</feature>
<feature type="binding site" evidence="1">
    <location>
        <position position="350"/>
    </location>
    <ligand>
        <name>UDP-N-acetyl-alpha-D-glucosamine</name>
        <dbReference type="ChEBI" id="CHEBI:57705"/>
    </ligand>
</feature>
<feature type="binding site" evidence="1">
    <location>
        <position position="361"/>
    </location>
    <ligand>
        <name>UDP-N-acetyl-alpha-D-glucosamine</name>
        <dbReference type="ChEBI" id="CHEBI:57705"/>
    </ligand>
</feature>
<feature type="binding site" evidence="1">
    <location>
        <position position="364"/>
    </location>
    <ligand>
        <name>acetyl-CoA</name>
        <dbReference type="ChEBI" id="CHEBI:57288"/>
    </ligand>
</feature>
<feature type="binding site" evidence="1">
    <location>
        <begin position="370"/>
        <end position="371"/>
    </location>
    <ligand>
        <name>acetyl-CoA</name>
        <dbReference type="ChEBI" id="CHEBI:57288"/>
    </ligand>
</feature>
<feature type="binding site" evidence="1">
    <location>
        <position position="389"/>
    </location>
    <ligand>
        <name>acetyl-CoA</name>
        <dbReference type="ChEBI" id="CHEBI:57288"/>
    </ligand>
</feature>
<feature type="binding site" evidence="1">
    <location>
        <position position="407"/>
    </location>
    <ligand>
        <name>acetyl-CoA</name>
        <dbReference type="ChEBI" id="CHEBI:57288"/>
    </ligand>
</feature>
<feature type="binding site" evidence="1">
    <location>
        <position position="424"/>
    </location>
    <ligand>
        <name>acetyl-CoA</name>
        <dbReference type="ChEBI" id="CHEBI:57288"/>
    </ligand>
</feature>
<name>GLMU_BARQU</name>
<gene>
    <name evidence="1" type="primary">glmU</name>
    <name type="ordered locus">BQ07650</name>
</gene>
<accession>Q6FZH5</accession>
<comment type="function">
    <text evidence="1">Catalyzes the last two sequential reactions in the de novo biosynthetic pathway for UDP-N-acetylglucosamine (UDP-GlcNAc). The C-terminal domain catalyzes the transfer of acetyl group from acetyl coenzyme A to glucosamine-1-phosphate (GlcN-1-P) to produce N-acetylglucosamine-1-phosphate (GlcNAc-1-P), which is converted into UDP-GlcNAc by the transfer of uridine 5-monophosphate (from uridine 5-triphosphate), a reaction catalyzed by the N-terminal domain.</text>
</comment>
<comment type="catalytic activity">
    <reaction evidence="1">
        <text>alpha-D-glucosamine 1-phosphate + acetyl-CoA = N-acetyl-alpha-D-glucosamine 1-phosphate + CoA + H(+)</text>
        <dbReference type="Rhea" id="RHEA:13725"/>
        <dbReference type="ChEBI" id="CHEBI:15378"/>
        <dbReference type="ChEBI" id="CHEBI:57287"/>
        <dbReference type="ChEBI" id="CHEBI:57288"/>
        <dbReference type="ChEBI" id="CHEBI:57776"/>
        <dbReference type="ChEBI" id="CHEBI:58516"/>
        <dbReference type="EC" id="2.3.1.157"/>
    </reaction>
</comment>
<comment type="catalytic activity">
    <reaction evidence="1">
        <text>N-acetyl-alpha-D-glucosamine 1-phosphate + UTP + H(+) = UDP-N-acetyl-alpha-D-glucosamine + diphosphate</text>
        <dbReference type="Rhea" id="RHEA:13509"/>
        <dbReference type="ChEBI" id="CHEBI:15378"/>
        <dbReference type="ChEBI" id="CHEBI:33019"/>
        <dbReference type="ChEBI" id="CHEBI:46398"/>
        <dbReference type="ChEBI" id="CHEBI:57705"/>
        <dbReference type="ChEBI" id="CHEBI:57776"/>
        <dbReference type="EC" id="2.7.7.23"/>
    </reaction>
</comment>
<comment type="cofactor">
    <cofactor evidence="1">
        <name>Mg(2+)</name>
        <dbReference type="ChEBI" id="CHEBI:18420"/>
    </cofactor>
    <text evidence="1">Binds 1 Mg(2+) ion per subunit.</text>
</comment>
<comment type="pathway">
    <text evidence="1">Nucleotide-sugar biosynthesis; UDP-N-acetyl-alpha-D-glucosamine biosynthesis; N-acetyl-alpha-D-glucosamine 1-phosphate from alpha-D-glucosamine 6-phosphate (route II): step 2/2.</text>
</comment>
<comment type="pathway">
    <text evidence="1">Nucleotide-sugar biosynthesis; UDP-N-acetyl-alpha-D-glucosamine biosynthesis; UDP-N-acetyl-alpha-D-glucosamine from N-acetyl-alpha-D-glucosamine 1-phosphate: step 1/1.</text>
</comment>
<comment type="pathway">
    <text evidence="1">Bacterial outer membrane biogenesis; LPS lipid A biosynthesis.</text>
</comment>
<comment type="subunit">
    <text evidence="1">Homotrimer.</text>
</comment>
<comment type="subcellular location">
    <subcellularLocation>
        <location evidence="1">Cytoplasm</location>
    </subcellularLocation>
</comment>
<comment type="similarity">
    <text evidence="1">In the N-terminal section; belongs to the N-acetylglucosamine-1-phosphate uridyltransferase family.</text>
</comment>
<comment type="similarity">
    <text evidence="1">In the C-terminal section; belongs to the transferase hexapeptide repeat family.</text>
</comment>
<protein>
    <recommendedName>
        <fullName evidence="1">Bifunctional protein GlmU</fullName>
    </recommendedName>
    <domain>
        <recommendedName>
            <fullName evidence="1">UDP-N-acetylglucosamine pyrophosphorylase</fullName>
            <ecNumber evidence="1">2.7.7.23</ecNumber>
        </recommendedName>
        <alternativeName>
            <fullName evidence="1">N-acetylglucosamine-1-phosphate uridyltransferase</fullName>
        </alternativeName>
    </domain>
    <domain>
        <recommendedName>
            <fullName evidence="1">Glucosamine-1-phosphate N-acetyltransferase</fullName>
            <ecNumber evidence="1">2.3.1.157</ecNumber>
        </recommendedName>
    </domain>
</protein>
<dbReference type="EC" id="2.7.7.23" evidence="1"/>
<dbReference type="EC" id="2.3.1.157" evidence="1"/>
<dbReference type="EMBL" id="BX897700">
    <property type="protein sequence ID" value="CAF26249.1"/>
    <property type="molecule type" value="Genomic_DNA"/>
</dbReference>
<dbReference type="RefSeq" id="WP_011179500.1">
    <property type="nucleotide sequence ID" value="NC_005955.1"/>
</dbReference>
<dbReference type="SMR" id="Q6FZH5"/>
<dbReference type="KEGG" id="bqu:BQ07650"/>
<dbReference type="eggNOG" id="COG1207">
    <property type="taxonomic scope" value="Bacteria"/>
</dbReference>
<dbReference type="HOGENOM" id="CLU_029499_15_2_5"/>
<dbReference type="OrthoDB" id="9775031at2"/>
<dbReference type="UniPathway" id="UPA00113">
    <property type="reaction ID" value="UER00532"/>
</dbReference>
<dbReference type="UniPathway" id="UPA00113">
    <property type="reaction ID" value="UER00533"/>
</dbReference>
<dbReference type="UniPathway" id="UPA00973"/>
<dbReference type="Proteomes" id="UP000000597">
    <property type="component" value="Chromosome"/>
</dbReference>
<dbReference type="GO" id="GO:0005737">
    <property type="term" value="C:cytoplasm"/>
    <property type="evidence" value="ECO:0007669"/>
    <property type="project" value="UniProtKB-SubCell"/>
</dbReference>
<dbReference type="GO" id="GO:0016020">
    <property type="term" value="C:membrane"/>
    <property type="evidence" value="ECO:0007669"/>
    <property type="project" value="GOC"/>
</dbReference>
<dbReference type="GO" id="GO:0019134">
    <property type="term" value="F:glucosamine-1-phosphate N-acetyltransferase activity"/>
    <property type="evidence" value="ECO:0007669"/>
    <property type="project" value="UniProtKB-UniRule"/>
</dbReference>
<dbReference type="GO" id="GO:0000287">
    <property type="term" value="F:magnesium ion binding"/>
    <property type="evidence" value="ECO:0007669"/>
    <property type="project" value="UniProtKB-UniRule"/>
</dbReference>
<dbReference type="GO" id="GO:0003977">
    <property type="term" value="F:UDP-N-acetylglucosamine diphosphorylase activity"/>
    <property type="evidence" value="ECO:0007669"/>
    <property type="project" value="UniProtKB-UniRule"/>
</dbReference>
<dbReference type="GO" id="GO:0000902">
    <property type="term" value="P:cell morphogenesis"/>
    <property type="evidence" value="ECO:0007669"/>
    <property type="project" value="UniProtKB-UniRule"/>
</dbReference>
<dbReference type="GO" id="GO:0071555">
    <property type="term" value="P:cell wall organization"/>
    <property type="evidence" value="ECO:0007669"/>
    <property type="project" value="UniProtKB-KW"/>
</dbReference>
<dbReference type="GO" id="GO:0009245">
    <property type="term" value="P:lipid A biosynthetic process"/>
    <property type="evidence" value="ECO:0007669"/>
    <property type="project" value="UniProtKB-UniRule"/>
</dbReference>
<dbReference type="GO" id="GO:0009252">
    <property type="term" value="P:peptidoglycan biosynthetic process"/>
    <property type="evidence" value="ECO:0007669"/>
    <property type="project" value="UniProtKB-UniRule"/>
</dbReference>
<dbReference type="GO" id="GO:0008360">
    <property type="term" value="P:regulation of cell shape"/>
    <property type="evidence" value="ECO:0007669"/>
    <property type="project" value="UniProtKB-KW"/>
</dbReference>
<dbReference type="GO" id="GO:0006048">
    <property type="term" value="P:UDP-N-acetylglucosamine biosynthetic process"/>
    <property type="evidence" value="ECO:0007669"/>
    <property type="project" value="UniProtKB-UniPathway"/>
</dbReference>
<dbReference type="CDD" id="cd02540">
    <property type="entry name" value="GT2_GlmU_N_bac"/>
    <property type="match status" value="1"/>
</dbReference>
<dbReference type="CDD" id="cd03353">
    <property type="entry name" value="LbH_GlmU_C"/>
    <property type="match status" value="1"/>
</dbReference>
<dbReference type="Gene3D" id="2.160.10.10">
    <property type="entry name" value="Hexapeptide repeat proteins"/>
    <property type="match status" value="1"/>
</dbReference>
<dbReference type="Gene3D" id="3.90.550.10">
    <property type="entry name" value="Spore Coat Polysaccharide Biosynthesis Protein SpsA, Chain A"/>
    <property type="match status" value="1"/>
</dbReference>
<dbReference type="HAMAP" id="MF_01631">
    <property type="entry name" value="GlmU"/>
    <property type="match status" value="1"/>
</dbReference>
<dbReference type="InterPro" id="IPR005882">
    <property type="entry name" value="Bifunctional_GlmU"/>
</dbReference>
<dbReference type="InterPro" id="IPR050065">
    <property type="entry name" value="GlmU-like"/>
</dbReference>
<dbReference type="InterPro" id="IPR038009">
    <property type="entry name" value="GlmU_C_LbH"/>
</dbReference>
<dbReference type="InterPro" id="IPR001451">
    <property type="entry name" value="Hexapep"/>
</dbReference>
<dbReference type="InterPro" id="IPR018357">
    <property type="entry name" value="Hexapep_transf_CS"/>
</dbReference>
<dbReference type="InterPro" id="IPR025877">
    <property type="entry name" value="MobA-like_NTP_Trfase"/>
</dbReference>
<dbReference type="InterPro" id="IPR029044">
    <property type="entry name" value="Nucleotide-diphossugar_trans"/>
</dbReference>
<dbReference type="InterPro" id="IPR011004">
    <property type="entry name" value="Trimer_LpxA-like_sf"/>
</dbReference>
<dbReference type="NCBIfam" id="TIGR01173">
    <property type="entry name" value="glmU"/>
    <property type="match status" value="1"/>
</dbReference>
<dbReference type="NCBIfam" id="NF010933">
    <property type="entry name" value="PRK14353.1"/>
    <property type="match status" value="1"/>
</dbReference>
<dbReference type="PANTHER" id="PTHR43584:SF3">
    <property type="entry name" value="BIFUNCTIONAL PROTEIN GLMU"/>
    <property type="match status" value="1"/>
</dbReference>
<dbReference type="PANTHER" id="PTHR43584">
    <property type="entry name" value="NUCLEOTIDYL TRANSFERASE"/>
    <property type="match status" value="1"/>
</dbReference>
<dbReference type="Pfam" id="PF00132">
    <property type="entry name" value="Hexapep"/>
    <property type="match status" value="1"/>
</dbReference>
<dbReference type="Pfam" id="PF12804">
    <property type="entry name" value="NTP_transf_3"/>
    <property type="match status" value="1"/>
</dbReference>
<dbReference type="SUPFAM" id="SSF53448">
    <property type="entry name" value="Nucleotide-diphospho-sugar transferases"/>
    <property type="match status" value="1"/>
</dbReference>
<dbReference type="SUPFAM" id="SSF51161">
    <property type="entry name" value="Trimeric LpxA-like enzymes"/>
    <property type="match status" value="1"/>
</dbReference>
<dbReference type="PROSITE" id="PS00101">
    <property type="entry name" value="HEXAPEP_TRANSFERASES"/>
    <property type="match status" value="1"/>
</dbReference>
<keyword id="KW-0012">Acyltransferase</keyword>
<keyword id="KW-0133">Cell shape</keyword>
<keyword id="KW-0961">Cell wall biogenesis/degradation</keyword>
<keyword id="KW-0963">Cytoplasm</keyword>
<keyword id="KW-0460">Magnesium</keyword>
<keyword id="KW-0479">Metal-binding</keyword>
<keyword id="KW-0511">Multifunctional enzyme</keyword>
<keyword id="KW-0548">Nucleotidyltransferase</keyword>
<keyword id="KW-0573">Peptidoglycan synthesis</keyword>
<keyword id="KW-0677">Repeat</keyword>
<keyword id="KW-0808">Transferase</keyword>
<reference key="1">
    <citation type="journal article" date="2004" name="Proc. Natl. Acad. Sci. U.S.A.">
        <title>The louse-borne human pathogen Bartonella quintana is a genomic derivative of the zoonotic agent Bartonella henselae.</title>
        <authorList>
            <person name="Alsmark U.C.M."/>
            <person name="Frank A.C."/>
            <person name="Karlberg E.O."/>
            <person name="Legault B.-A."/>
            <person name="Ardell D.H."/>
            <person name="Canbaeck B."/>
            <person name="Eriksson A.-S."/>
            <person name="Naeslund A.K."/>
            <person name="Handley S.A."/>
            <person name="Huvet M."/>
            <person name="La Scola B."/>
            <person name="Holmberg M."/>
            <person name="Andersson S.G.E."/>
        </authorList>
    </citation>
    <scope>NUCLEOTIDE SEQUENCE [LARGE SCALE GENOMIC DNA]</scope>
    <source>
        <strain>Toulouse</strain>
    </source>
</reference>
<evidence type="ECO:0000255" key="1">
    <source>
        <dbReference type="HAMAP-Rule" id="MF_01631"/>
    </source>
</evidence>
<organism>
    <name type="scientific">Bartonella quintana (strain Toulouse)</name>
    <name type="common">Rochalimaea quintana</name>
    <dbReference type="NCBI Taxonomy" id="283165"/>
    <lineage>
        <taxon>Bacteria</taxon>
        <taxon>Pseudomonadati</taxon>
        <taxon>Pseudomonadota</taxon>
        <taxon>Alphaproteobacteria</taxon>
        <taxon>Hyphomicrobiales</taxon>
        <taxon>Bartonellaceae</taxon>
        <taxon>Bartonella</taxon>
    </lineage>
</organism>
<sequence>MRSCLSIVLAAGEGTRMKSSLPKVLHKIAGLPLVCHVIKQIELAGASQLAVVVGAGAQDVTHVVQSFIKSVMIFEQKERLGTAHAVLSARLALQKEVDDVLIVFGDTPLIKQDSLLKVREQLAVGADVVVAGFYASDPTGYGRLLEKNGKLIAIVEEKDASDEEKKISFCNGGILALNGKRALSLLEKVNNYNSKQEYYLTDIVSIASREGLEVQVVEVPFDNIVGINNCFELFEADSLWQKRKARDLMLSGVTILKPETVYFSYDTEIEQGVVIEPNVYFGLGVKVQSGAVIHAFSYLEGAVVGIDAQIGPYAHLRPGTELARSVKIGNFCEVKKAKIGEASKINHLSYIGDAEIGAQTNIGAGTITCNYDGFHKYKIVIGDHAFIGSNSALVSPLMIGNGSYIASGSVITEDVPINSMAFGRARQVTKKDYAAKLRVRLSGNQQKK</sequence>